<reference key="1">
    <citation type="submission" date="2004-06" db="EMBL/GenBank/DDBJ databases">
        <title>Phytosiderophore secretion in zinc-deficient barley is independent of iron deficiency.</title>
        <authorList>
            <person name="Nishizawa N.K."/>
            <person name="Takahashi M."/>
            <person name="Suzuki M."/>
            <person name="Nakanishi H."/>
            <person name="Satoshi M."/>
            <person name="Yoshimura E."/>
        </authorList>
    </citation>
    <scope>NUCLEOTIDE SEQUENCE [MRNA]</scope>
    <source>
        <tissue>Root</tissue>
    </source>
</reference>
<reference key="2">
    <citation type="journal article" date="2005" name="Nature">
        <title>The map-based sequence of the rice genome.</title>
        <authorList>
            <consortium name="International rice genome sequencing project (IRGSP)"/>
        </authorList>
    </citation>
    <scope>NUCLEOTIDE SEQUENCE [LARGE SCALE GENOMIC DNA]</scope>
    <source>
        <strain>cv. Nipponbare</strain>
    </source>
</reference>
<reference key="3">
    <citation type="journal article" date="2008" name="Nucleic Acids Res.">
        <title>The rice annotation project database (RAP-DB): 2008 update.</title>
        <authorList>
            <consortium name="The rice annotation project (RAP)"/>
        </authorList>
    </citation>
    <scope>GENOME REANNOTATION</scope>
    <source>
        <strain>cv. Nipponbare</strain>
    </source>
</reference>
<reference key="4">
    <citation type="journal article" date="2013" name="Rice">
        <title>Improvement of the Oryza sativa Nipponbare reference genome using next generation sequence and optical map data.</title>
        <authorList>
            <person name="Kawahara Y."/>
            <person name="de la Bastide M."/>
            <person name="Hamilton J.P."/>
            <person name="Kanamori H."/>
            <person name="McCombie W.R."/>
            <person name="Ouyang S."/>
            <person name="Schwartz D.C."/>
            <person name="Tanaka T."/>
            <person name="Wu J."/>
            <person name="Zhou S."/>
            <person name="Childs K.L."/>
            <person name="Davidson R.M."/>
            <person name="Lin H."/>
            <person name="Quesada-Ocampo L."/>
            <person name="Vaillancourt B."/>
            <person name="Sakai H."/>
            <person name="Lee S.S."/>
            <person name="Kim J."/>
            <person name="Numa H."/>
            <person name="Itoh T."/>
            <person name="Buell C.R."/>
            <person name="Matsumoto T."/>
        </authorList>
    </citation>
    <scope>GENOME REANNOTATION</scope>
    <source>
        <strain>cv. Nipponbare</strain>
    </source>
</reference>
<reference key="5">
    <citation type="journal article" date="2006" name="Plant J.">
        <title>Biosynthesis and secretion of mugineic acid family phytosiderophores in zinc-deficient barley.</title>
        <authorList>
            <person name="Suzuki M."/>
            <person name="Takahashi M."/>
            <person name="Tsukamoto T."/>
            <person name="Watanabe S."/>
            <person name="Matsuhashi S."/>
            <person name="Yazaki J."/>
            <person name="Kishimoto N."/>
            <person name="Kikuchi S."/>
            <person name="Nakanishi H."/>
            <person name="Mori S."/>
            <person name="Nishizawa N.K."/>
        </authorList>
    </citation>
    <scope>NUCLEOTIDE SEQUENCE [MRNA] OF 35-494</scope>
</reference>
<reference key="6">
    <citation type="journal article" date="2005" name="J. Exp. Bot.">
        <title>Expression of iron-acquisition-related genes in iron-deficient rice is co-ordinately induced by partially conserved iron-deficiency-responsive elements.</title>
        <authorList>
            <person name="Kobayashi T."/>
            <person name="Suzuki M."/>
            <person name="Inoue H."/>
            <person name="Itai R.N."/>
            <person name="Takahashi M."/>
            <person name="Nakanishi H."/>
            <person name="Mori S."/>
            <person name="Nishizawa N.K."/>
        </authorList>
    </citation>
    <scope>INDUCTION BY IRON DEFICIENCY</scope>
</reference>
<reference key="7">
    <citation type="journal article" date="2007" name="Plant Mol. Biol.">
        <title>The expression of iron homeostasis-related genes during rice germination.</title>
        <authorList>
            <person name="Nozoye T."/>
            <person name="Inoue H."/>
            <person name="Takahashi M."/>
            <person name="Ishimaru Y."/>
            <person name="Nakanishi H."/>
            <person name="Mori S."/>
            <person name="Nishizawa N.K."/>
        </authorList>
    </citation>
    <scope>DEVELOPMENTAL STAGE</scope>
</reference>
<reference key="8">
    <citation type="journal article" date="2008" name="Plant Mol. Biol.">
        <title>Identification and localisation of the rice nicotianamine aminotransferase gene OsNAAT1 expression suggests the site of phytosiderophore synthesis in rice.</title>
        <authorList>
            <person name="Inoue H."/>
            <person name="Takahashi M."/>
            <person name="Kobayashi T."/>
            <person name="Suzuki M."/>
            <person name="Nakanishi H."/>
            <person name="Mori S."/>
            <person name="Nishizawa N.K."/>
        </authorList>
    </citation>
    <scope>FUNCTION</scope>
    <scope>CATALYTIC ACTIVITY</scope>
    <scope>TISSUE SPECIFICITY</scope>
    <scope>INDUCTION BY IRON DEFICIENCY</scope>
</reference>
<keyword id="KW-0032">Aminotransferase</keyword>
<keyword id="KW-0663">Pyridoxal phosphate</keyword>
<keyword id="KW-1185">Reference proteome</keyword>
<keyword id="KW-0808">Transferase</keyword>
<dbReference type="EC" id="2.6.1.80" evidence="5"/>
<dbReference type="EMBL" id="AB182275">
    <property type="protein sequence ID" value="BAF95202.1"/>
    <property type="molecule type" value="mRNA"/>
</dbReference>
<dbReference type="EMBL" id="AP005743">
    <property type="protein sequence ID" value="BAD23582.1"/>
    <property type="status" value="ALT_INIT"/>
    <property type="molecule type" value="Genomic_DNA"/>
</dbReference>
<dbReference type="EMBL" id="AP008208">
    <property type="protein sequence ID" value="BAH91645.1"/>
    <property type="status" value="ALT_SEQ"/>
    <property type="molecule type" value="Genomic_DNA"/>
</dbReference>
<dbReference type="EMBL" id="AP014958">
    <property type="protein sequence ID" value="BAS78288.1"/>
    <property type="molecule type" value="Genomic_DNA"/>
</dbReference>
<dbReference type="EMBL" id="AB206814">
    <property type="protein sequence ID" value="BAE86873.1"/>
    <property type="status" value="ALT_INIT"/>
    <property type="molecule type" value="mRNA"/>
</dbReference>
<dbReference type="RefSeq" id="XP_015627400.1">
    <property type="nucleotide sequence ID" value="XM_015771914.1"/>
</dbReference>
<dbReference type="SMR" id="A0A0P0VI36"/>
<dbReference type="FunCoup" id="A0A0P0VI36">
    <property type="interactions" value="302"/>
</dbReference>
<dbReference type="STRING" id="39947.A0A0P0VI36"/>
<dbReference type="PaxDb" id="39947-A0A0P0VI36"/>
<dbReference type="EnsemblPlants" id="Os02t0306401-01">
    <property type="protein sequence ID" value="Os02t0306401-01"/>
    <property type="gene ID" value="Os02g0306401"/>
</dbReference>
<dbReference type="Gramene" id="Os02t0306401-01">
    <property type="protein sequence ID" value="Os02t0306401-01"/>
    <property type="gene ID" value="Os02g0306401"/>
</dbReference>
<dbReference type="KEGG" id="dosa:Os02g0306401"/>
<dbReference type="eggNOG" id="KOG0259">
    <property type="taxonomic scope" value="Eukaryota"/>
</dbReference>
<dbReference type="HOGENOM" id="CLU_017584_4_2_1"/>
<dbReference type="InParanoid" id="A0A0P0VI36"/>
<dbReference type="OMA" id="LVPGSQC"/>
<dbReference type="OrthoDB" id="7042322at2759"/>
<dbReference type="BRENDA" id="2.6.1.80">
    <property type="organism ID" value="4460"/>
</dbReference>
<dbReference type="PlantReactome" id="R-OSA-9025754">
    <property type="pathway name" value="Mugineic acid biosynthesis"/>
</dbReference>
<dbReference type="Proteomes" id="UP000000763">
    <property type="component" value="Chromosome 2"/>
</dbReference>
<dbReference type="Proteomes" id="UP000059680">
    <property type="component" value="Chromosome 2"/>
</dbReference>
<dbReference type="GO" id="GO:0004838">
    <property type="term" value="F:L-tyrosine-2-oxoglutarate transaminase activity"/>
    <property type="evidence" value="ECO:0000318"/>
    <property type="project" value="GO_Central"/>
</dbReference>
<dbReference type="GO" id="GO:0033855">
    <property type="term" value="F:nicotianamine aminotransferase activity"/>
    <property type="evidence" value="ECO:0007669"/>
    <property type="project" value="UniProtKB-EC"/>
</dbReference>
<dbReference type="GO" id="GO:0030170">
    <property type="term" value="F:pyridoxal phosphate binding"/>
    <property type="evidence" value="ECO:0007669"/>
    <property type="project" value="InterPro"/>
</dbReference>
<dbReference type="GO" id="GO:0009058">
    <property type="term" value="P:biosynthetic process"/>
    <property type="evidence" value="ECO:0007669"/>
    <property type="project" value="InterPro"/>
</dbReference>
<dbReference type="GO" id="GO:0006572">
    <property type="term" value="P:tyrosine catabolic process"/>
    <property type="evidence" value="ECO:0000318"/>
    <property type="project" value="GO_Central"/>
</dbReference>
<dbReference type="CDD" id="cd00609">
    <property type="entry name" value="AAT_like"/>
    <property type="match status" value="1"/>
</dbReference>
<dbReference type="FunFam" id="3.90.1150.10:FF:000040">
    <property type="entry name" value="Tyrosine aminotransferase"/>
    <property type="match status" value="1"/>
</dbReference>
<dbReference type="FunFam" id="3.40.640.10:FF:000048">
    <property type="entry name" value="tyrosine aminotransferase"/>
    <property type="match status" value="1"/>
</dbReference>
<dbReference type="Gene3D" id="3.90.1150.10">
    <property type="entry name" value="Aspartate Aminotransferase, domain 1"/>
    <property type="match status" value="1"/>
</dbReference>
<dbReference type="Gene3D" id="3.40.640.10">
    <property type="entry name" value="Type I PLP-dependent aspartate aminotransferase-like (Major domain)"/>
    <property type="match status" value="1"/>
</dbReference>
<dbReference type="InterPro" id="IPR004839">
    <property type="entry name" value="Aminotransferase_I/II_large"/>
</dbReference>
<dbReference type="InterPro" id="IPR015424">
    <property type="entry name" value="PyrdxlP-dep_Trfase"/>
</dbReference>
<dbReference type="InterPro" id="IPR015421">
    <property type="entry name" value="PyrdxlP-dep_Trfase_major"/>
</dbReference>
<dbReference type="InterPro" id="IPR015422">
    <property type="entry name" value="PyrdxlP-dep_Trfase_small"/>
</dbReference>
<dbReference type="InterPro" id="IPR005958">
    <property type="entry name" value="TyrNic_aminoTrfase"/>
</dbReference>
<dbReference type="NCBIfam" id="TIGR01265">
    <property type="entry name" value="tyr_nico_aTase"/>
    <property type="match status" value="1"/>
</dbReference>
<dbReference type="PANTHER" id="PTHR45744:SF5">
    <property type="entry name" value="NICOTIANAMINE AMINOTRANSFERASE 1"/>
    <property type="match status" value="1"/>
</dbReference>
<dbReference type="PANTHER" id="PTHR45744">
    <property type="entry name" value="TYROSINE AMINOTRANSFERASE"/>
    <property type="match status" value="1"/>
</dbReference>
<dbReference type="Pfam" id="PF00155">
    <property type="entry name" value="Aminotran_1_2"/>
    <property type="match status" value="1"/>
</dbReference>
<dbReference type="PIRSF" id="PIRSF000517">
    <property type="entry name" value="Tyr_transaminase"/>
    <property type="match status" value="1"/>
</dbReference>
<dbReference type="PRINTS" id="PR00753">
    <property type="entry name" value="ACCSYNTHASE"/>
</dbReference>
<dbReference type="SUPFAM" id="SSF53383">
    <property type="entry name" value="PLP-dependent transferases"/>
    <property type="match status" value="1"/>
</dbReference>
<proteinExistence type="evidence at protein level"/>
<sequence length="494" mass="53822">MHASCCCAPPESVSHTRRISYKYSGTSYPTRTTTTSSSAPEFTNKKQSTAMAPTTAAAAASSNGGGESDGSSKEWRLTAPTRGGAMAAAGDKMSIRAVRYKISASVDDRGPRPVLPLAHGDPSVFPEFRTAAEAEDAVADALRSGDFNCYPAGVGLPAARRAVADHLSRDLPYKLSSDDIFLTAGGTQAIEVVISILAQPGTNILLPRPGYPNYEARAAFNNLEVRHFDLIPEKGWEIDLNSLESIADKNTTAIVIINPNNPCGNVYTYEHLSKVAEVARKLGILVITDEVYGNLVFGSSPFVPMGCFGHIVPILTIGSLSKRWIVPGWRLGWVAICDPKKTLQETKIATLITNFLNVSTDPATFIQGALPNILKNTKEEFFKRIIDLLTETSDICYRGIKDIKCITCPHKPEGSMFVMVKLNLYLLEGIHDDVDFCCQLAKEESVILCPGSVLGMKNWVRITFAIDSSSLLDGLERIKSFCQRHKKKNPLNYI</sequence>
<accession>A0A0P0VI36</accession>
<accession>A9CM06</accession>
<accession>C7IYK7</accession>
<accession>Q6K2Y8</accession>
<protein>
    <recommendedName>
        <fullName evidence="6">Nicotianamine aminotransferase 1</fullName>
        <shortName evidence="6">OsNAAT1</shortName>
        <ecNumber evidence="5">2.6.1.80</ecNumber>
    </recommendedName>
</protein>
<organism>
    <name type="scientific">Oryza sativa subsp. japonica</name>
    <name type="common">Rice</name>
    <dbReference type="NCBI Taxonomy" id="39947"/>
    <lineage>
        <taxon>Eukaryota</taxon>
        <taxon>Viridiplantae</taxon>
        <taxon>Streptophyta</taxon>
        <taxon>Embryophyta</taxon>
        <taxon>Tracheophyta</taxon>
        <taxon>Spermatophyta</taxon>
        <taxon>Magnoliopsida</taxon>
        <taxon>Liliopsida</taxon>
        <taxon>Poales</taxon>
        <taxon>Poaceae</taxon>
        <taxon>BOP clade</taxon>
        <taxon>Oryzoideae</taxon>
        <taxon>Oryzeae</taxon>
        <taxon>Oryzinae</taxon>
        <taxon>Oryza</taxon>
        <taxon>Oryza sativa</taxon>
    </lineage>
</organism>
<gene>
    <name evidence="6" type="primary">NAAT1</name>
    <name evidence="9" type="ordered locus">Os02g0306401</name>
    <name evidence="7" type="ordered locus">LOC_Os02g20360</name>
    <name evidence="8" type="ORF">P0543C11.29</name>
</gene>
<feature type="chain" id="PRO_0000446970" description="Nicotianamine aminotransferase 1">
    <location>
        <begin position="1"/>
        <end position="494"/>
    </location>
</feature>
<feature type="region of interest" description="Disordered" evidence="2">
    <location>
        <begin position="24"/>
        <end position="76"/>
    </location>
</feature>
<feature type="compositionally biased region" description="Low complexity" evidence="2">
    <location>
        <begin position="24"/>
        <end position="38"/>
    </location>
</feature>
<feature type="compositionally biased region" description="Low complexity" evidence="2">
    <location>
        <begin position="48"/>
        <end position="62"/>
    </location>
</feature>
<feature type="modified residue" description="N6-(pyridoxal phosphate)lysine" evidence="1">
    <location>
        <position position="322"/>
    </location>
</feature>
<feature type="sequence conflict" description="In Ref. 1; BAF95202." evidence="7" ref="1">
    <original>S</original>
    <variation>F</variation>
    <location>
        <position position="38"/>
    </location>
</feature>
<comment type="function">
    <text evidence="5">Involved in biosynthesis of mugineic acid family phytosiderophores, which are ferric iron chelators produced in graminaceous plants in response to iron deficiency.</text>
</comment>
<comment type="catalytic activity">
    <reaction evidence="5">
        <text>nicotianamine + 2-oxoglutarate = 3''-deamino-3''-oxonicotianamine + L-glutamate</text>
        <dbReference type="Rhea" id="RHEA:22104"/>
        <dbReference type="ChEBI" id="CHEBI:16810"/>
        <dbReference type="ChEBI" id="CHEBI:29985"/>
        <dbReference type="ChEBI" id="CHEBI:58249"/>
        <dbReference type="ChEBI" id="CHEBI:58685"/>
        <dbReference type="EC" id="2.6.1.80"/>
    </reaction>
</comment>
<comment type="cofactor">
    <cofactor evidence="1">
        <name>pyridoxal 5'-phosphate</name>
        <dbReference type="ChEBI" id="CHEBI:597326"/>
    </cofactor>
</comment>
<comment type="tissue specificity">
    <text evidence="5">Expressed in companion and pericycle cells adjacent to the protoxylem of roots (PubMed:18034312). Expressed in companion cells of shoots (PubMed:18034312).</text>
</comment>
<comment type="developmental stage">
    <text evidence="4">Expressed in the scutellum and leaf primordium of fully mature seeds (PubMed:17333504). In germinating seeds, expressed in the vascular bundle of the scutellum, the coleoptile, the bud scale, the coleorhiza, and the base of the seminal root (PubMed:17333504).</text>
</comment>
<comment type="induction">
    <text evidence="3 5">Induced by iron deficiency in roots and leaves.</text>
</comment>
<comment type="similarity">
    <text evidence="7">Belongs to the class-I pyridoxal-phosphate-dependent aminotransferase family.</text>
</comment>
<comment type="sequence caution" evidence="7">
    <conflict type="erroneous initiation">
        <sequence resource="EMBL-CDS" id="BAD23582"/>
    </conflict>
    <text>Truncated N-terminus.</text>
</comment>
<comment type="sequence caution" evidence="7">
    <conflict type="erroneous initiation">
        <sequence resource="EMBL-CDS" id="BAE86873"/>
    </conflict>
    <text>Truncated N-terminus.</text>
</comment>
<comment type="sequence caution" evidence="7">
    <conflict type="erroneous gene model prediction">
        <sequence resource="EMBL-CDS" id="BAH91645"/>
    </conflict>
</comment>
<evidence type="ECO:0000250" key="1">
    <source>
        <dbReference type="UniProtKB" id="P17735"/>
    </source>
</evidence>
<evidence type="ECO:0000256" key="2">
    <source>
        <dbReference type="SAM" id="MobiDB-lite"/>
    </source>
</evidence>
<evidence type="ECO:0000269" key="3">
    <source>
    </source>
</evidence>
<evidence type="ECO:0000269" key="4">
    <source>
    </source>
</evidence>
<evidence type="ECO:0000269" key="5">
    <source>
    </source>
</evidence>
<evidence type="ECO:0000303" key="6">
    <source>
    </source>
</evidence>
<evidence type="ECO:0000305" key="7"/>
<evidence type="ECO:0000312" key="8">
    <source>
        <dbReference type="EMBL" id="BAD23582.1"/>
    </source>
</evidence>
<evidence type="ECO:0000312" key="9">
    <source>
        <dbReference type="EMBL" id="BAS78288.1"/>
    </source>
</evidence>
<name>NAAT1_ORYSJ</name>